<sequence length="319" mass="35737">MARVVFRDARIYLIQWLTKIRHTLNQRQSLNTDKEHLRKIVRGMFWLMLLIISAKVAHSLWRYFSFSAEYTAVSPSANKPPRADAKTFDKNDVQLISQQNWFGKYQPVATPVKQPEPASVAETRLNVVLRGIAFGARPGAVIEEGGKQQVYLQGERLDSHNAVIEEINRDHVMLRYQGKIERLSLAEEGHSTVAVTNKKAVSDEAKQAVAEPAASAPVEIPTAVRQALTKDPQKIFNYIQLTPVRKEGIVGYAVKPGADRSLFDASGFKEGDIAIALNQQDFTDPRAMIALMRQLPSMDSIQLTVLRKGARHDISIALR</sequence>
<name>GSPC2_ECOH1</name>
<reference key="1">
    <citation type="journal article" date="2010" name="J. Bacteriol.">
        <title>A commensal gone bad: complete genome sequence of the prototypical enterotoxigenic Escherichia coli strain H10407.</title>
        <authorList>
            <person name="Crossman L.C."/>
            <person name="Chaudhuri R.R."/>
            <person name="Beatson S.A."/>
            <person name="Wells T.J."/>
            <person name="Desvaux M."/>
            <person name="Cunningham A.F."/>
            <person name="Petty N.K."/>
            <person name="Mahon V."/>
            <person name="Brinkley C."/>
            <person name="Hobman J.L."/>
            <person name="Savarino S.J."/>
            <person name="Turner S.M."/>
            <person name="Pallen M.J."/>
            <person name="Penn C.W."/>
            <person name="Parkhill J."/>
            <person name="Turner A.K."/>
            <person name="Johnson T.J."/>
            <person name="Thomson N.R."/>
            <person name="Smith S.G."/>
            <person name="Henderson I.R."/>
        </authorList>
    </citation>
    <scope>NUCLEOTIDE SEQUENCE [LARGE SCALE GENOMIC DNA]</scope>
    <source>
        <strain>H10407 / ETEC</strain>
    </source>
</reference>
<reference key="2">
    <citation type="journal article" date="2012" name="Infect. Immun.">
        <title>YghG (GspSbeta) is a novel pilot protein required for localization of the GspSbeta type II secretion system secretin of enterotoxigenic Escherichia coli.</title>
        <authorList>
            <person name="Strozen T.G."/>
            <person name="Li G."/>
            <person name="Howard S.P."/>
        </authorList>
    </citation>
    <scope>DISCUSSION OF T2SS</scope>
    <source>
        <strain>H10407 / ETEC</strain>
    </source>
</reference>
<reference evidence="5" key="3">
    <citation type="journal article" date="2011" name="PLoS Pathog.">
        <title>Structural and functional studies on the interaction of GspC and GspD in the type II secretion system.</title>
        <authorList>
            <person name="Korotkov K.V."/>
            <person name="Johnson T.L."/>
            <person name="Jobling M.G."/>
            <person name="Pruneda J."/>
            <person name="Pardon E."/>
            <person name="Heroux A."/>
            <person name="Turley S."/>
            <person name="Steyaert J."/>
            <person name="Holmes R.K."/>
            <person name="Sandkvist M."/>
            <person name="Hol W.G."/>
        </authorList>
    </citation>
    <scope>X-RAY CRYSTALLOGRAPHY (2.63 ANGSTROMS) OF 122-186</scope>
    <scope>INTERACTION WITH GSPD2</scope>
    <source>
        <strain>H10407 / ETEC</strain>
    </source>
</reference>
<dbReference type="EMBL" id="FN649414">
    <property type="protein sequence ID" value="CBJ02738.1"/>
    <property type="status" value="ALT_INIT"/>
    <property type="molecule type" value="Genomic_DNA"/>
</dbReference>
<dbReference type="PDB" id="3OSS">
    <property type="method" value="X-ray"/>
    <property type="resolution" value="2.63 A"/>
    <property type="chains" value="C=122-186"/>
</dbReference>
<dbReference type="PDBsum" id="3OSS"/>
<dbReference type="SMR" id="E3PJ87"/>
<dbReference type="KEGG" id="elh:ETEC_3238"/>
<dbReference type="HOGENOM" id="CLU_068012_2_0_6"/>
<dbReference type="EvolutionaryTrace" id="E3PJ87"/>
<dbReference type="GO" id="GO:0005886">
    <property type="term" value="C:plasma membrane"/>
    <property type="evidence" value="ECO:0007669"/>
    <property type="project" value="UniProtKB-SubCell"/>
</dbReference>
<dbReference type="GO" id="GO:0015627">
    <property type="term" value="C:type II protein secretion system complex"/>
    <property type="evidence" value="ECO:0007669"/>
    <property type="project" value="InterPro"/>
</dbReference>
<dbReference type="GO" id="GO:0015628">
    <property type="term" value="P:protein secretion by the type II secretion system"/>
    <property type="evidence" value="ECO:0007669"/>
    <property type="project" value="InterPro"/>
</dbReference>
<dbReference type="Gene3D" id="2.30.30.830">
    <property type="match status" value="1"/>
</dbReference>
<dbReference type="Gene3D" id="2.30.42.10">
    <property type="match status" value="1"/>
</dbReference>
<dbReference type="InterPro" id="IPR036034">
    <property type="entry name" value="PDZ_sf"/>
</dbReference>
<dbReference type="InterPro" id="IPR024961">
    <property type="entry name" value="T2SS_GspC_N"/>
</dbReference>
<dbReference type="InterPro" id="IPR001639">
    <property type="entry name" value="T2SS_protein-GspC"/>
</dbReference>
<dbReference type="NCBIfam" id="NF007242">
    <property type="entry name" value="PRK09681.1"/>
    <property type="match status" value="1"/>
</dbReference>
<dbReference type="NCBIfam" id="TIGR01713">
    <property type="entry name" value="typeII_sec_gspC"/>
    <property type="match status" value="1"/>
</dbReference>
<dbReference type="Pfam" id="PF11356">
    <property type="entry name" value="T2SSC"/>
    <property type="match status" value="1"/>
</dbReference>
<dbReference type="SUPFAM" id="SSF50156">
    <property type="entry name" value="PDZ domain-like"/>
    <property type="match status" value="1"/>
</dbReference>
<dbReference type="PROSITE" id="PS01141">
    <property type="entry name" value="T2SP_C"/>
    <property type="match status" value="1"/>
</dbReference>
<feature type="chain" id="PRO_0000446500" description="Type II secretion system protein C 2">
    <location>
        <begin position="1"/>
        <end position="319"/>
    </location>
</feature>
<feature type="topological domain" description="Cytoplasmic" evidence="2">
    <location>
        <begin position="1"/>
        <end position="42"/>
    </location>
</feature>
<feature type="transmembrane region" description="Helical" evidence="2">
    <location>
        <begin position="43"/>
        <end position="65"/>
    </location>
</feature>
<feature type="topological domain" description="Periplasmic" evidence="3">
    <location>
        <begin position="66"/>
        <end position="319"/>
    </location>
</feature>
<feature type="strand" evidence="6">
    <location>
        <begin position="128"/>
        <end position="137"/>
    </location>
</feature>
<feature type="strand" evidence="6">
    <location>
        <begin position="139"/>
        <end position="144"/>
    </location>
</feature>
<feature type="strand" evidence="6">
    <location>
        <begin position="147"/>
        <end position="151"/>
    </location>
</feature>
<feature type="strand" evidence="6">
    <location>
        <begin position="158"/>
        <end position="167"/>
    </location>
</feature>
<feature type="strand" evidence="6">
    <location>
        <begin position="169"/>
        <end position="176"/>
    </location>
</feature>
<feature type="strand" evidence="6">
    <location>
        <begin position="179"/>
        <end position="185"/>
    </location>
</feature>
<organism>
    <name type="scientific">Escherichia coli O78:H11 (strain H10407 / ETEC)</name>
    <dbReference type="NCBI Taxonomy" id="316401"/>
    <lineage>
        <taxon>Bacteria</taxon>
        <taxon>Pseudomonadati</taxon>
        <taxon>Pseudomonadota</taxon>
        <taxon>Gammaproteobacteria</taxon>
        <taxon>Enterobacterales</taxon>
        <taxon>Enterobacteriaceae</taxon>
        <taxon>Escherichia</taxon>
    </lineage>
</organism>
<comment type="function">
    <text evidence="4">Involved in a type II secretion system (T2SS, formerly general secretion pathway, GSP) for the export of folded proteins across the outer membrane.</text>
</comment>
<comment type="subunit">
    <text evidence="1">Interacts with outer cell membrane protein GspD2 in the periplasm.</text>
</comment>
<comment type="subcellular location">
    <subcellularLocation>
        <location evidence="2">Cell inner membrane</location>
        <topology evidence="2">Single-pass membrane protein</topology>
    </subcellularLocation>
</comment>
<comment type="miscellaneous">
    <text evidence="4">Encoded in a type II secretion system (T2SS-beta); this strain encodes 2 T2SS but only this one (beta) is expressed under standard laboratory conditions.</text>
</comment>
<comment type="similarity">
    <text evidence="2">Belongs to the GSP C family.</text>
</comment>
<comment type="sequence caution" evidence="2">
    <conflict type="erroneous initiation">
        <sequence resource="EMBL-CDS" id="CBJ02738"/>
    </conflict>
    <text>Truncated N-terminus.</text>
</comment>
<protein>
    <recommendedName>
        <fullName>Type II secretion system protein C 2</fullName>
        <shortName>T2SS protein C 2</shortName>
    </recommendedName>
    <alternativeName>
        <fullName>General secretion pathway protein C 2</fullName>
    </alternativeName>
    <alternativeName>
        <fullName>Type II secretion system protein C beta</fullName>
    </alternativeName>
</protein>
<evidence type="ECO:0000269" key="1">
    <source>
    </source>
</evidence>
<evidence type="ECO:0000305" key="2"/>
<evidence type="ECO:0000305" key="3">
    <source>
    </source>
</evidence>
<evidence type="ECO:0000305" key="4">
    <source>
    </source>
</evidence>
<evidence type="ECO:0007744" key="5">
    <source>
        <dbReference type="PDB" id="3OSS"/>
    </source>
</evidence>
<evidence type="ECO:0007829" key="6">
    <source>
        <dbReference type="PDB" id="3OSS"/>
    </source>
</evidence>
<accession>E3PJ87</accession>
<keyword id="KW-0002">3D-structure</keyword>
<keyword id="KW-0997">Cell inner membrane</keyword>
<keyword id="KW-1003">Cell membrane</keyword>
<keyword id="KW-0472">Membrane</keyword>
<keyword id="KW-0653">Protein transport</keyword>
<keyword id="KW-0812">Transmembrane</keyword>
<keyword id="KW-1133">Transmembrane helix</keyword>
<keyword id="KW-0813">Transport</keyword>
<proteinExistence type="evidence at protein level"/>
<gene>
    <name type="primary">gspC2</name>
    <name type="ordered locus">ETEC_3238</name>
</gene>